<comment type="subcellular location">
    <subcellularLocation>
        <location evidence="1">Cytoplasm</location>
    </subcellularLocation>
</comment>
<comment type="similarity">
    <text evidence="1">Belongs to the UPF0294 family.</text>
</comment>
<comment type="sequence caution" evidence="2">
    <conflict type="erroneous initiation">
        <sequence resource="EMBL-CDS" id="AAO70183"/>
    </conflict>
</comment>
<comment type="sequence caution" evidence="2">
    <conflict type="erroneous initiation">
        <sequence resource="EMBL-CDS" id="CAD08712"/>
    </conflict>
</comment>
<evidence type="ECO:0000255" key="1">
    <source>
        <dbReference type="HAMAP-Rule" id="MF_01119"/>
    </source>
</evidence>
<evidence type="ECO:0000305" key="2"/>
<sequence length="266" mass="29920">MRKNTYAMRYVAGQPAERILPLGSFASIGQALPAGEPLSSEERIRILVWNIFKQQRAEWLSVLKNYGKDAHLVLLQEAQTTPELVQFATANYLAADQVPAFVLPQHPSGVMTLSAAHPVYCCPLREREPILRLAKSALVTVYPLPDTRLLMVVNVHAVNFSLGVDVYSKQLLPIGDQIAHHSGPVIMAGDFNAWSRPRMNALYRFAREMSLRQVRFTDDQRRRAFGRPLDFVFYRGLNVNEASVLVTRASDHNPLLVEFSPGKPEQ</sequence>
<organism>
    <name type="scientific">Salmonella typhi</name>
    <dbReference type="NCBI Taxonomy" id="90370"/>
    <lineage>
        <taxon>Bacteria</taxon>
        <taxon>Pseudomonadati</taxon>
        <taxon>Pseudomonadota</taxon>
        <taxon>Gammaproteobacteria</taxon>
        <taxon>Enterobacterales</taxon>
        <taxon>Enterobacteriaceae</taxon>
        <taxon>Salmonella</taxon>
    </lineage>
</organism>
<dbReference type="EMBL" id="AL513382">
    <property type="protein sequence ID" value="CAD08712.1"/>
    <property type="status" value="ALT_INIT"/>
    <property type="molecule type" value="Genomic_DNA"/>
</dbReference>
<dbReference type="EMBL" id="AE014613">
    <property type="protein sequence ID" value="AAO70183.1"/>
    <property type="status" value="ALT_INIT"/>
    <property type="molecule type" value="Genomic_DNA"/>
</dbReference>
<dbReference type="RefSeq" id="NP_454861.1">
    <property type="nucleotide sequence ID" value="NC_003198.1"/>
</dbReference>
<dbReference type="RefSeq" id="WP_001230964.1">
    <property type="nucleotide sequence ID" value="NZ_WSUR01000037.1"/>
</dbReference>
<dbReference type="SMR" id="Q8Z985"/>
<dbReference type="STRING" id="220341.gene:17584315"/>
<dbReference type="KEGG" id="stt:t2607"/>
<dbReference type="KEGG" id="sty:STY0279"/>
<dbReference type="PATRIC" id="fig|220341.7.peg.281"/>
<dbReference type="eggNOG" id="COG3021">
    <property type="taxonomic scope" value="Bacteria"/>
</dbReference>
<dbReference type="HOGENOM" id="CLU_083563_0_0_6"/>
<dbReference type="OMA" id="HAINFSF"/>
<dbReference type="Proteomes" id="UP000000541">
    <property type="component" value="Chromosome"/>
</dbReference>
<dbReference type="Proteomes" id="UP000002670">
    <property type="component" value="Chromosome"/>
</dbReference>
<dbReference type="GO" id="GO:0005737">
    <property type="term" value="C:cytoplasm"/>
    <property type="evidence" value="ECO:0007669"/>
    <property type="project" value="UniProtKB-SubCell"/>
</dbReference>
<dbReference type="GO" id="GO:0003824">
    <property type="term" value="F:catalytic activity"/>
    <property type="evidence" value="ECO:0007669"/>
    <property type="project" value="InterPro"/>
</dbReference>
<dbReference type="Gene3D" id="3.60.10.10">
    <property type="entry name" value="Endonuclease/exonuclease/phosphatase"/>
    <property type="match status" value="1"/>
</dbReference>
<dbReference type="HAMAP" id="MF_01119">
    <property type="entry name" value="UPF0294"/>
    <property type="match status" value="1"/>
</dbReference>
<dbReference type="InterPro" id="IPR036691">
    <property type="entry name" value="Endo/exonu/phosph_ase_sf"/>
</dbReference>
<dbReference type="InterPro" id="IPR005135">
    <property type="entry name" value="Endo/exonuclease/phosphatase"/>
</dbReference>
<dbReference type="InterPro" id="IPR022958">
    <property type="entry name" value="UPF0294"/>
</dbReference>
<dbReference type="NCBIfam" id="NF003839">
    <property type="entry name" value="PRK05421.1-1"/>
    <property type="match status" value="1"/>
</dbReference>
<dbReference type="NCBIfam" id="NF003840">
    <property type="entry name" value="PRK05421.1-2"/>
    <property type="match status" value="1"/>
</dbReference>
<dbReference type="NCBIfam" id="NF003841">
    <property type="entry name" value="PRK05421.1-3"/>
    <property type="match status" value="1"/>
</dbReference>
<dbReference type="NCBIfam" id="NF003842">
    <property type="entry name" value="PRK05421.1-4"/>
    <property type="match status" value="1"/>
</dbReference>
<dbReference type="Pfam" id="PF03372">
    <property type="entry name" value="Exo_endo_phos"/>
    <property type="match status" value="1"/>
</dbReference>
<dbReference type="SUPFAM" id="SSF56219">
    <property type="entry name" value="DNase I-like"/>
    <property type="match status" value="1"/>
</dbReference>
<name>YAFD_SALTI</name>
<accession>Q8Z985</accession>
<proteinExistence type="inferred from homology"/>
<keyword id="KW-0963">Cytoplasm</keyword>
<feature type="chain" id="PRO_0000074641" description="UPF0294 protein YafD">
    <location>
        <begin position="1"/>
        <end position="266"/>
    </location>
</feature>
<protein>
    <recommendedName>
        <fullName evidence="1">UPF0294 protein YafD</fullName>
    </recommendedName>
</protein>
<reference key="1">
    <citation type="journal article" date="2001" name="Nature">
        <title>Complete genome sequence of a multiple drug resistant Salmonella enterica serovar Typhi CT18.</title>
        <authorList>
            <person name="Parkhill J."/>
            <person name="Dougan G."/>
            <person name="James K.D."/>
            <person name="Thomson N.R."/>
            <person name="Pickard D."/>
            <person name="Wain J."/>
            <person name="Churcher C.M."/>
            <person name="Mungall K.L."/>
            <person name="Bentley S.D."/>
            <person name="Holden M.T.G."/>
            <person name="Sebaihia M."/>
            <person name="Baker S."/>
            <person name="Basham D."/>
            <person name="Brooks K."/>
            <person name="Chillingworth T."/>
            <person name="Connerton P."/>
            <person name="Cronin A."/>
            <person name="Davis P."/>
            <person name="Davies R.M."/>
            <person name="Dowd L."/>
            <person name="White N."/>
            <person name="Farrar J."/>
            <person name="Feltwell T."/>
            <person name="Hamlin N."/>
            <person name="Haque A."/>
            <person name="Hien T.T."/>
            <person name="Holroyd S."/>
            <person name="Jagels K."/>
            <person name="Krogh A."/>
            <person name="Larsen T.S."/>
            <person name="Leather S."/>
            <person name="Moule S."/>
            <person name="O'Gaora P."/>
            <person name="Parry C."/>
            <person name="Quail M.A."/>
            <person name="Rutherford K.M."/>
            <person name="Simmonds M."/>
            <person name="Skelton J."/>
            <person name="Stevens K."/>
            <person name="Whitehead S."/>
            <person name="Barrell B.G."/>
        </authorList>
    </citation>
    <scope>NUCLEOTIDE SEQUENCE [LARGE SCALE GENOMIC DNA]</scope>
    <source>
        <strain>CT18</strain>
    </source>
</reference>
<reference key="2">
    <citation type="journal article" date="2003" name="J. Bacteriol.">
        <title>Comparative genomics of Salmonella enterica serovar Typhi strains Ty2 and CT18.</title>
        <authorList>
            <person name="Deng W."/>
            <person name="Liou S.-R."/>
            <person name="Plunkett G. III"/>
            <person name="Mayhew G.F."/>
            <person name="Rose D.J."/>
            <person name="Burland V."/>
            <person name="Kodoyianni V."/>
            <person name="Schwartz D.C."/>
            <person name="Blattner F.R."/>
        </authorList>
    </citation>
    <scope>NUCLEOTIDE SEQUENCE [LARGE SCALE GENOMIC DNA]</scope>
    <source>
        <strain>ATCC 700931 / Ty2</strain>
    </source>
</reference>
<gene>
    <name evidence="1" type="primary">yafD</name>
    <name type="ordered locus">STY0279</name>
    <name type="ordered locus">t2607</name>
</gene>